<evidence type="ECO:0000250" key="1"/>
<evidence type="ECO:0000255" key="2">
    <source>
        <dbReference type="PROSITE-ProRule" id="PRU00266"/>
    </source>
</evidence>
<evidence type="ECO:0000256" key="3">
    <source>
        <dbReference type="SAM" id="MobiDB-lite"/>
    </source>
</evidence>
<protein>
    <recommendedName>
        <fullName>Double-stranded RNA-binding protein 6</fullName>
    </recommendedName>
    <alternativeName>
        <fullName>dsRNA-binding protein 5</fullName>
        <shortName>OsDRB5</shortName>
    </alternativeName>
    <alternativeName>
        <fullName>dsRNA-binding protein 6</fullName>
    </alternativeName>
</protein>
<feature type="chain" id="PRO_0000404683" description="Double-stranded RNA-binding protein 6">
    <location>
        <begin position="1"/>
        <end position="514"/>
    </location>
</feature>
<feature type="domain" description="DRBM 1" evidence="2">
    <location>
        <begin position="1"/>
        <end position="70"/>
    </location>
</feature>
<feature type="domain" description="DRBM 2" evidence="2">
    <location>
        <begin position="87"/>
        <end position="155"/>
    </location>
</feature>
<feature type="region of interest" description="Disordered" evidence="3">
    <location>
        <begin position="195"/>
        <end position="268"/>
    </location>
</feature>
<feature type="region of interest" description="Disordered" evidence="3">
    <location>
        <begin position="455"/>
        <end position="496"/>
    </location>
</feature>
<feature type="compositionally biased region" description="Polar residues" evidence="3">
    <location>
        <begin position="216"/>
        <end position="225"/>
    </location>
</feature>
<feature type="compositionally biased region" description="Polar residues" evidence="3">
    <location>
        <begin position="249"/>
        <end position="263"/>
    </location>
</feature>
<feature type="compositionally biased region" description="Polar residues" evidence="3">
    <location>
        <begin position="473"/>
        <end position="484"/>
    </location>
</feature>
<comment type="function">
    <text evidence="1">Binds double-stranded RNA.</text>
</comment>
<sequence length="514" mass="56078">MYKNQLQELAQRSCFNLPAYTCLREGPDHAPRFKAAVNFNGEQFESPGFFTTLRQAEHAAAEVALAALARRGPSYSLAARILDETGVYKNLLQEVAQRVGAPLPSYTTERSGLGHLPVFTCTVELAGITFTGDPAKNKKQAEKNAASAAWSSLRQLVRQEASSSNEPESNDEQEQIRIARALLNYRLKEKMAMANNPHASPFPKKFPMQPERRTAFPQSSHSSYSKILPLFRPKSNSRSRPESPAASDAASQTPFRPTESPNPRSRFPAAEAAPYVPVGHFRMPCHSMAPPVTVRTSIPVFSAPPLPPPGARTQQLPPLMSHPPPIRMASPVRIRPAPPLFTPSAVQGPKPMMPVQIKDVQHQQIKETRSPVMPVQVKDAQNQLLKGSLSPVIPVQIKDVQSQPPKEALSPAIPVQIKDVQLQPRNEPVSIGKGVVPLPAIRPPVKVEAPAEVKEASQPVAGSSVVQCKADTSPDSLPKTQLKTANADNADAKDDHLPVDAEEVEDIIRHLELK</sequence>
<dbReference type="EMBL" id="AC024594">
    <property type="protein sequence ID" value="AAK21352.1"/>
    <property type="molecule type" value="Genomic_DNA"/>
</dbReference>
<dbReference type="EMBL" id="DP000086">
    <property type="protein sequence ID" value="AAP54300.1"/>
    <property type="molecule type" value="Genomic_DNA"/>
</dbReference>
<dbReference type="EMBL" id="AP008216">
    <property type="protein sequence ID" value="BAF26788.1"/>
    <property type="molecule type" value="Genomic_DNA"/>
</dbReference>
<dbReference type="EMBL" id="AP014966">
    <property type="protein sequence ID" value="BAT11333.1"/>
    <property type="molecule type" value="Genomic_DNA"/>
</dbReference>
<dbReference type="EMBL" id="CM000147">
    <property type="protein sequence ID" value="EAZ16445.1"/>
    <property type="molecule type" value="Genomic_DNA"/>
</dbReference>
<dbReference type="EMBL" id="AK066524">
    <property type="protein sequence ID" value="BAG90011.1"/>
    <property type="molecule type" value="mRNA"/>
</dbReference>
<dbReference type="RefSeq" id="XP_015614779.1">
    <property type="nucleotide sequence ID" value="XM_015759293.1"/>
</dbReference>
<dbReference type="SMR" id="Q9AV50"/>
<dbReference type="FunCoup" id="Q9AV50">
    <property type="interactions" value="2473"/>
</dbReference>
<dbReference type="STRING" id="39947.Q9AV50"/>
<dbReference type="PaxDb" id="39947-Q9AV50"/>
<dbReference type="EnsemblPlants" id="Os10t0480500-01">
    <property type="protein sequence ID" value="Os10t0480500-01"/>
    <property type="gene ID" value="Os10g0480500"/>
</dbReference>
<dbReference type="Gramene" id="Os10t0480500-01">
    <property type="protein sequence ID" value="Os10t0480500-01"/>
    <property type="gene ID" value="Os10g0480500"/>
</dbReference>
<dbReference type="KEGG" id="dosa:Os10g0480500"/>
<dbReference type="eggNOG" id="ENOG502QTBA">
    <property type="taxonomic scope" value="Eukaryota"/>
</dbReference>
<dbReference type="HOGENOM" id="CLU_038996_1_0_1"/>
<dbReference type="InParanoid" id="Q9AV50"/>
<dbReference type="OMA" id="KKFFMQN"/>
<dbReference type="OrthoDB" id="5988181at2759"/>
<dbReference type="Proteomes" id="UP000000763">
    <property type="component" value="Chromosome 10"/>
</dbReference>
<dbReference type="Proteomes" id="UP000007752">
    <property type="component" value="Chromosome 10"/>
</dbReference>
<dbReference type="Proteomes" id="UP000059680">
    <property type="component" value="Chromosome 10"/>
</dbReference>
<dbReference type="GO" id="GO:0005737">
    <property type="term" value="C:cytoplasm"/>
    <property type="evidence" value="ECO:0007669"/>
    <property type="project" value="EnsemblPlants"/>
</dbReference>
<dbReference type="GO" id="GO:0003725">
    <property type="term" value="F:double-stranded RNA binding"/>
    <property type="evidence" value="ECO:0007669"/>
    <property type="project" value="EnsemblPlants"/>
</dbReference>
<dbReference type="GO" id="GO:0035196">
    <property type="term" value="P:miRNA processing"/>
    <property type="evidence" value="ECO:0007669"/>
    <property type="project" value="EnsemblPlants"/>
</dbReference>
<dbReference type="CDD" id="cd19907">
    <property type="entry name" value="DSRM_AtDRB-like_rpt1"/>
    <property type="match status" value="1"/>
</dbReference>
<dbReference type="CDD" id="cd19908">
    <property type="entry name" value="DSRM_AtDRB-like_rpt2"/>
    <property type="match status" value="1"/>
</dbReference>
<dbReference type="FunFam" id="3.30.160.20:FF:000036">
    <property type="entry name" value="Double-stranded RNA-binding protein 2"/>
    <property type="match status" value="2"/>
</dbReference>
<dbReference type="Gene3D" id="3.30.160.20">
    <property type="match status" value="2"/>
</dbReference>
<dbReference type="InterPro" id="IPR044450">
    <property type="entry name" value="AtDRB-like_DSRM_1"/>
</dbReference>
<dbReference type="InterPro" id="IPR044451">
    <property type="entry name" value="AtDRB-like_DSRM_2"/>
</dbReference>
<dbReference type="InterPro" id="IPR014720">
    <property type="entry name" value="dsRBD_dom"/>
</dbReference>
<dbReference type="PANTHER" id="PTHR46031">
    <property type="match status" value="1"/>
</dbReference>
<dbReference type="PANTHER" id="PTHR46031:SF26">
    <property type="entry name" value="DOUBLE-STRANDED RNA-BINDING PROTEIN 2"/>
    <property type="match status" value="1"/>
</dbReference>
<dbReference type="Pfam" id="PF00035">
    <property type="entry name" value="dsrm"/>
    <property type="match status" value="2"/>
</dbReference>
<dbReference type="SMART" id="SM00358">
    <property type="entry name" value="DSRM"/>
    <property type="match status" value="2"/>
</dbReference>
<dbReference type="SUPFAM" id="SSF54768">
    <property type="entry name" value="dsRNA-binding domain-like"/>
    <property type="match status" value="2"/>
</dbReference>
<dbReference type="PROSITE" id="PS50137">
    <property type="entry name" value="DS_RBD"/>
    <property type="match status" value="2"/>
</dbReference>
<reference key="1">
    <citation type="journal article" date="2003" name="Science">
        <title>In-depth view of structure, activity, and evolution of rice chromosome 10.</title>
        <authorList>
            <person name="Yu Y."/>
            <person name="Rambo T."/>
            <person name="Currie J."/>
            <person name="Saski C."/>
            <person name="Kim H.-R."/>
            <person name="Collura K."/>
            <person name="Thompson S."/>
            <person name="Simmons J."/>
            <person name="Yang T.-J."/>
            <person name="Nah G."/>
            <person name="Patel A.J."/>
            <person name="Thurmond S."/>
            <person name="Henry D."/>
            <person name="Oates R."/>
            <person name="Palmer M."/>
            <person name="Pries G."/>
            <person name="Gibson J."/>
            <person name="Anderson H."/>
            <person name="Paradkar M."/>
            <person name="Crane L."/>
            <person name="Dale J."/>
            <person name="Carver M.B."/>
            <person name="Wood T."/>
            <person name="Frisch D."/>
            <person name="Engler F."/>
            <person name="Soderlund C."/>
            <person name="Palmer L.E."/>
            <person name="Teytelman L."/>
            <person name="Nascimento L."/>
            <person name="De la Bastide M."/>
            <person name="Spiegel L."/>
            <person name="Ware D."/>
            <person name="O'Shaughnessy A."/>
            <person name="Dike S."/>
            <person name="Dedhia N."/>
            <person name="Preston R."/>
            <person name="Huang E."/>
            <person name="Ferraro K."/>
            <person name="Kuit K."/>
            <person name="Miller B."/>
            <person name="Zutavern T."/>
            <person name="Katzenberger F."/>
            <person name="Muller S."/>
            <person name="Balija V."/>
            <person name="Martienssen R.A."/>
            <person name="Stein L."/>
            <person name="Minx P."/>
            <person name="Johnson D."/>
            <person name="Cordum H."/>
            <person name="Mardis E."/>
            <person name="Cheng Z."/>
            <person name="Jiang J."/>
            <person name="Wilson R."/>
            <person name="McCombie W.R."/>
            <person name="Wing R.A."/>
            <person name="Yuan Q."/>
            <person name="Ouyang S."/>
            <person name="Liu J."/>
            <person name="Jones K.M."/>
            <person name="Gansberger K."/>
            <person name="Moffat K."/>
            <person name="Hill J."/>
            <person name="Tsitrin T."/>
            <person name="Overton L."/>
            <person name="Bera J."/>
            <person name="Kim M."/>
            <person name="Jin S."/>
            <person name="Tallon L."/>
            <person name="Ciecko A."/>
            <person name="Pai G."/>
            <person name="Van Aken S."/>
            <person name="Utterback T."/>
            <person name="Reidmuller S."/>
            <person name="Bormann J."/>
            <person name="Feldblyum T."/>
            <person name="Hsiao J."/>
            <person name="Zismann V."/>
            <person name="Blunt S."/>
            <person name="de Vazeille A.R."/>
            <person name="Shaffer T."/>
            <person name="Koo H."/>
            <person name="Suh B."/>
            <person name="Yang Q."/>
            <person name="Haas B."/>
            <person name="Peterson J."/>
            <person name="Pertea M."/>
            <person name="Volfovsky N."/>
            <person name="Wortman J."/>
            <person name="White O."/>
            <person name="Salzberg S.L."/>
            <person name="Fraser C.M."/>
            <person name="Buell C.R."/>
            <person name="Messing J."/>
            <person name="Song R."/>
            <person name="Fuks G."/>
            <person name="Llaca V."/>
            <person name="Kovchak S."/>
            <person name="Young S."/>
            <person name="Bowers J.E."/>
            <person name="Paterson A.H."/>
            <person name="Johns M.A."/>
            <person name="Mao L."/>
            <person name="Pan H."/>
            <person name="Dean R.A."/>
        </authorList>
    </citation>
    <scope>NUCLEOTIDE SEQUENCE [LARGE SCALE GENOMIC DNA]</scope>
    <source>
        <strain>cv. Nipponbare</strain>
    </source>
</reference>
<reference key="2">
    <citation type="journal article" date="2005" name="Nature">
        <title>The map-based sequence of the rice genome.</title>
        <authorList>
            <consortium name="International rice genome sequencing project (IRGSP)"/>
        </authorList>
    </citation>
    <scope>NUCLEOTIDE SEQUENCE [LARGE SCALE GENOMIC DNA]</scope>
    <source>
        <strain>cv. Nipponbare</strain>
    </source>
</reference>
<reference key="3">
    <citation type="journal article" date="2008" name="Nucleic Acids Res.">
        <title>The rice annotation project database (RAP-DB): 2008 update.</title>
        <authorList>
            <consortium name="The rice annotation project (RAP)"/>
        </authorList>
    </citation>
    <scope>GENOME REANNOTATION</scope>
    <source>
        <strain>cv. Nipponbare</strain>
    </source>
</reference>
<reference key="4">
    <citation type="journal article" date="2013" name="Rice">
        <title>Improvement of the Oryza sativa Nipponbare reference genome using next generation sequence and optical map data.</title>
        <authorList>
            <person name="Kawahara Y."/>
            <person name="de la Bastide M."/>
            <person name="Hamilton J.P."/>
            <person name="Kanamori H."/>
            <person name="McCombie W.R."/>
            <person name="Ouyang S."/>
            <person name="Schwartz D.C."/>
            <person name="Tanaka T."/>
            <person name="Wu J."/>
            <person name="Zhou S."/>
            <person name="Childs K.L."/>
            <person name="Davidson R.M."/>
            <person name="Lin H."/>
            <person name="Quesada-Ocampo L."/>
            <person name="Vaillancourt B."/>
            <person name="Sakai H."/>
            <person name="Lee S.S."/>
            <person name="Kim J."/>
            <person name="Numa H."/>
            <person name="Itoh T."/>
            <person name="Buell C.R."/>
            <person name="Matsumoto T."/>
        </authorList>
    </citation>
    <scope>GENOME REANNOTATION</scope>
    <source>
        <strain>cv. Nipponbare</strain>
    </source>
</reference>
<reference key="5">
    <citation type="journal article" date="2005" name="PLoS Biol.">
        <title>The genomes of Oryza sativa: a history of duplications.</title>
        <authorList>
            <person name="Yu J."/>
            <person name="Wang J."/>
            <person name="Lin W."/>
            <person name="Li S."/>
            <person name="Li H."/>
            <person name="Zhou J."/>
            <person name="Ni P."/>
            <person name="Dong W."/>
            <person name="Hu S."/>
            <person name="Zeng C."/>
            <person name="Zhang J."/>
            <person name="Zhang Y."/>
            <person name="Li R."/>
            <person name="Xu Z."/>
            <person name="Li S."/>
            <person name="Li X."/>
            <person name="Zheng H."/>
            <person name="Cong L."/>
            <person name="Lin L."/>
            <person name="Yin J."/>
            <person name="Geng J."/>
            <person name="Li G."/>
            <person name="Shi J."/>
            <person name="Liu J."/>
            <person name="Lv H."/>
            <person name="Li J."/>
            <person name="Wang J."/>
            <person name="Deng Y."/>
            <person name="Ran L."/>
            <person name="Shi X."/>
            <person name="Wang X."/>
            <person name="Wu Q."/>
            <person name="Li C."/>
            <person name="Ren X."/>
            <person name="Wang J."/>
            <person name="Wang X."/>
            <person name="Li D."/>
            <person name="Liu D."/>
            <person name="Zhang X."/>
            <person name="Ji Z."/>
            <person name="Zhao W."/>
            <person name="Sun Y."/>
            <person name="Zhang Z."/>
            <person name="Bao J."/>
            <person name="Han Y."/>
            <person name="Dong L."/>
            <person name="Ji J."/>
            <person name="Chen P."/>
            <person name="Wu S."/>
            <person name="Liu J."/>
            <person name="Xiao Y."/>
            <person name="Bu D."/>
            <person name="Tan J."/>
            <person name="Yang L."/>
            <person name="Ye C."/>
            <person name="Zhang J."/>
            <person name="Xu J."/>
            <person name="Zhou Y."/>
            <person name="Yu Y."/>
            <person name="Zhang B."/>
            <person name="Zhuang S."/>
            <person name="Wei H."/>
            <person name="Liu B."/>
            <person name="Lei M."/>
            <person name="Yu H."/>
            <person name="Li Y."/>
            <person name="Xu H."/>
            <person name="Wei S."/>
            <person name="He X."/>
            <person name="Fang L."/>
            <person name="Zhang Z."/>
            <person name="Zhang Y."/>
            <person name="Huang X."/>
            <person name="Su Z."/>
            <person name="Tong W."/>
            <person name="Li J."/>
            <person name="Tong Z."/>
            <person name="Li S."/>
            <person name="Ye J."/>
            <person name="Wang L."/>
            <person name="Fang L."/>
            <person name="Lei T."/>
            <person name="Chen C.-S."/>
            <person name="Chen H.-C."/>
            <person name="Xu Z."/>
            <person name="Li H."/>
            <person name="Huang H."/>
            <person name="Zhang F."/>
            <person name="Xu H."/>
            <person name="Li N."/>
            <person name="Zhao C."/>
            <person name="Li S."/>
            <person name="Dong L."/>
            <person name="Huang Y."/>
            <person name="Li L."/>
            <person name="Xi Y."/>
            <person name="Qi Q."/>
            <person name="Li W."/>
            <person name="Zhang B."/>
            <person name="Hu W."/>
            <person name="Zhang Y."/>
            <person name="Tian X."/>
            <person name="Jiao Y."/>
            <person name="Liang X."/>
            <person name="Jin J."/>
            <person name="Gao L."/>
            <person name="Zheng W."/>
            <person name="Hao B."/>
            <person name="Liu S.-M."/>
            <person name="Wang W."/>
            <person name="Yuan L."/>
            <person name="Cao M."/>
            <person name="McDermott J."/>
            <person name="Samudrala R."/>
            <person name="Wang J."/>
            <person name="Wong G.K.-S."/>
            <person name="Yang H."/>
        </authorList>
    </citation>
    <scope>NUCLEOTIDE SEQUENCE [LARGE SCALE GENOMIC DNA]</scope>
    <source>
        <strain>cv. Nipponbare</strain>
    </source>
</reference>
<reference key="6">
    <citation type="journal article" date="2003" name="Science">
        <title>Collection, mapping, and annotation of over 28,000 cDNA clones from japonica rice.</title>
        <authorList>
            <consortium name="The rice full-length cDNA consortium"/>
        </authorList>
    </citation>
    <scope>NUCLEOTIDE SEQUENCE [LARGE SCALE MRNA]</scope>
    <source>
        <strain>cv. Nipponbare</strain>
    </source>
</reference>
<name>DRB6_ORYSJ</name>
<accession>Q9AV50</accession>
<accession>A0A0P0XVV3</accession>
<accession>Q7XDB1</accession>
<gene>
    <name type="primary">DRB6</name>
    <name type="synonym">DRB5</name>
    <name type="ordered locus">Os10g0480500</name>
    <name type="ordered locus">LOC_Os10g33970</name>
    <name type="ORF">OsJ_31914</name>
    <name type="ORF">OSJNBa0093B11.1</name>
</gene>
<organism>
    <name type="scientific">Oryza sativa subsp. japonica</name>
    <name type="common">Rice</name>
    <dbReference type="NCBI Taxonomy" id="39947"/>
    <lineage>
        <taxon>Eukaryota</taxon>
        <taxon>Viridiplantae</taxon>
        <taxon>Streptophyta</taxon>
        <taxon>Embryophyta</taxon>
        <taxon>Tracheophyta</taxon>
        <taxon>Spermatophyta</taxon>
        <taxon>Magnoliopsida</taxon>
        <taxon>Liliopsida</taxon>
        <taxon>Poales</taxon>
        <taxon>Poaceae</taxon>
        <taxon>BOP clade</taxon>
        <taxon>Oryzoideae</taxon>
        <taxon>Oryzeae</taxon>
        <taxon>Oryzinae</taxon>
        <taxon>Oryza</taxon>
        <taxon>Oryza sativa</taxon>
    </lineage>
</organism>
<proteinExistence type="evidence at transcript level"/>
<keyword id="KW-1185">Reference proteome</keyword>
<keyword id="KW-0677">Repeat</keyword>
<keyword id="KW-0694">RNA-binding</keyword>